<gene>
    <name evidence="1" type="primary">fluC</name>
    <name evidence="1" type="synonym">crcB</name>
    <name type="ordered locus">Gmet_3016</name>
</gene>
<evidence type="ECO:0000255" key="1">
    <source>
        <dbReference type="HAMAP-Rule" id="MF_00454"/>
    </source>
</evidence>
<protein>
    <recommendedName>
        <fullName evidence="1">Fluoride-specific ion channel FluC</fullName>
    </recommendedName>
</protein>
<dbReference type="EMBL" id="CP000148">
    <property type="protein sequence ID" value="ABB33231.1"/>
    <property type="molecule type" value="Genomic_DNA"/>
</dbReference>
<dbReference type="RefSeq" id="WP_004514330.1">
    <property type="nucleotide sequence ID" value="NC_007517.1"/>
</dbReference>
<dbReference type="SMR" id="Q39R93"/>
<dbReference type="STRING" id="269799.Gmet_3016"/>
<dbReference type="KEGG" id="gme:Gmet_3016"/>
<dbReference type="eggNOG" id="COG0239">
    <property type="taxonomic scope" value="Bacteria"/>
</dbReference>
<dbReference type="HOGENOM" id="CLU_114342_2_3_7"/>
<dbReference type="Proteomes" id="UP000007073">
    <property type="component" value="Chromosome"/>
</dbReference>
<dbReference type="GO" id="GO:0005886">
    <property type="term" value="C:plasma membrane"/>
    <property type="evidence" value="ECO:0007669"/>
    <property type="project" value="UniProtKB-SubCell"/>
</dbReference>
<dbReference type="GO" id="GO:0062054">
    <property type="term" value="F:fluoride channel activity"/>
    <property type="evidence" value="ECO:0007669"/>
    <property type="project" value="UniProtKB-UniRule"/>
</dbReference>
<dbReference type="GO" id="GO:0046872">
    <property type="term" value="F:metal ion binding"/>
    <property type="evidence" value="ECO:0007669"/>
    <property type="project" value="UniProtKB-KW"/>
</dbReference>
<dbReference type="GO" id="GO:0140114">
    <property type="term" value="P:cellular detoxification of fluoride"/>
    <property type="evidence" value="ECO:0007669"/>
    <property type="project" value="UniProtKB-UniRule"/>
</dbReference>
<dbReference type="HAMAP" id="MF_00454">
    <property type="entry name" value="FluC"/>
    <property type="match status" value="1"/>
</dbReference>
<dbReference type="InterPro" id="IPR003691">
    <property type="entry name" value="FluC"/>
</dbReference>
<dbReference type="NCBIfam" id="TIGR00494">
    <property type="entry name" value="crcB"/>
    <property type="match status" value="1"/>
</dbReference>
<dbReference type="PANTHER" id="PTHR28259">
    <property type="entry name" value="FLUORIDE EXPORT PROTEIN 1-RELATED"/>
    <property type="match status" value="1"/>
</dbReference>
<dbReference type="PANTHER" id="PTHR28259:SF1">
    <property type="entry name" value="FLUORIDE EXPORT PROTEIN 1-RELATED"/>
    <property type="match status" value="1"/>
</dbReference>
<dbReference type="Pfam" id="PF02537">
    <property type="entry name" value="CRCB"/>
    <property type="match status" value="1"/>
</dbReference>
<keyword id="KW-0997">Cell inner membrane</keyword>
<keyword id="KW-1003">Cell membrane</keyword>
<keyword id="KW-0407">Ion channel</keyword>
<keyword id="KW-0406">Ion transport</keyword>
<keyword id="KW-0472">Membrane</keyword>
<keyword id="KW-0479">Metal-binding</keyword>
<keyword id="KW-1185">Reference proteome</keyword>
<keyword id="KW-0915">Sodium</keyword>
<keyword id="KW-0812">Transmembrane</keyword>
<keyword id="KW-1133">Transmembrane helix</keyword>
<keyword id="KW-0813">Transport</keyword>
<organism>
    <name type="scientific">Geobacter metallireducens (strain ATCC 53774 / DSM 7210 / GS-15)</name>
    <dbReference type="NCBI Taxonomy" id="269799"/>
    <lineage>
        <taxon>Bacteria</taxon>
        <taxon>Pseudomonadati</taxon>
        <taxon>Thermodesulfobacteriota</taxon>
        <taxon>Desulfuromonadia</taxon>
        <taxon>Geobacterales</taxon>
        <taxon>Geobacteraceae</taxon>
        <taxon>Geobacter</taxon>
    </lineage>
</organism>
<comment type="function">
    <text evidence="1">Fluoride-specific ion channel. Important for reducing fluoride concentration in the cell, thus reducing its toxicity.</text>
</comment>
<comment type="catalytic activity">
    <reaction evidence="1">
        <text>fluoride(in) = fluoride(out)</text>
        <dbReference type="Rhea" id="RHEA:76159"/>
        <dbReference type="ChEBI" id="CHEBI:17051"/>
    </reaction>
    <physiologicalReaction direction="left-to-right" evidence="1">
        <dbReference type="Rhea" id="RHEA:76160"/>
    </physiologicalReaction>
</comment>
<comment type="activity regulation">
    <text evidence="1">Na(+) is not transported, but it plays an essential structural role and its presence is essential for fluoride channel function.</text>
</comment>
<comment type="subcellular location">
    <subcellularLocation>
        <location evidence="1">Cell inner membrane</location>
        <topology evidence="1">Multi-pass membrane protein</topology>
    </subcellularLocation>
</comment>
<comment type="similarity">
    <text evidence="1">Belongs to the fluoride channel Fluc/FEX (TC 1.A.43) family.</text>
</comment>
<reference key="1">
    <citation type="journal article" date="2009" name="BMC Microbiol.">
        <title>The genome sequence of Geobacter metallireducens: features of metabolism, physiology and regulation common and dissimilar to Geobacter sulfurreducens.</title>
        <authorList>
            <person name="Aklujkar M."/>
            <person name="Krushkal J."/>
            <person name="DiBartolo G."/>
            <person name="Lapidus A."/>
            <person name="Land M.L."/>
            <person name="Lovley D.R."/>
        </authorList>
    </citation>
    <scope>NUCLEOTIDE SEQUENCE [LARGE SCALE GENOMIC DNA]</scope>
    <source>
        <strain>ATCC 53774 / DSM 7210 / GS-15</strain>
    </source>
</reference>
<feature type="chain" id="PRO_0000252885" description="Fluoride-specific ion channel FluC">
    <location>
        <begin position="1"/>
        <end position="124"/>
    </location>
</feature>
<feature type="transmembrane region" description="Helical" evidence="1">
    <location>
        <begin position="4"/>
        <end position="24"/>
    </location>
</feature>
<feature type="transmembrane region" description="Helical" evidence="1">
    <location>
        <begin position="32"/>
        <end position="52"/>
    </location>
</feature>
<feature type="transmembrane region" description="Helical" evidence="1">
    <location>
        <begin position="67"/>
        <end position="87"/>
    </location>
</feature>
<feature type="transmembrane region" description="Helical" evidence="1">
    <location>
        <begin position="96"/>
        <end position="116"/>
    </location>
</feature>
<feature type="binding site" evidence="1">
    <location>
        <position position="75"/>
    </location>
    <ligand>
        <name>Na(+)</name>
        <dbReference type="ChEBI" id="CHEBI:29101"/>
        <note>structural</note>
    </ligand>
</feature>
<feature type="binding site" evidence="1">
    <location>
        <position position="78"/>
    </location>
    <ligand>
        <name>Na(+)</name>
        <dbReference type="ChEBI" id="CHEBI:29101"/>
        <note>structural</note>
    </ligand>
</feature>
<accession>Q39R93</accession>
<proteinExistence type="inferred from homology"/>
<sequence>MLTIVAIALFGALGCLARYLLAGWVYAFVGRGFPYGTLTVNVVGAFLIGLIMEFSLRTTLIPQELRIGLTIGFLGGLTTFSTFSYETFRLLEDGEFITAAVNVLASVLVCLACTWLGIMTARHL</sequence>
<name>FLUC_GEOMG</name>